<name>ANXE1_GIAIN</name>
<proteinExistence type="evidence at protein level"/>
<organism>
    <name type="scientific">Giardia intestinalis</name>
    <name type="common">Giardia lamblia</name>
    <dbReference type="NCBI Taxonomy" id="5741"/>
    <lineage>
        <taxon>Eukaryota</taxon>
        <taxon>Metamonada</taxon>
        <taxon>Diplomonadida</taxon>
        <taxon>Hexamitidae</taxon>
        <taxon>Giardiinae</taxon>
        <taxon>Giardia</taxon>
    </lineage>
</organism>
<reference key="1">
    <citation type="submission" date="1995-08" db="EMBL/GenBank/DDBJ databases">
        <authorList>
            <person name="Upcroft P."/>
            <person name="Healey A."/>
            <person name="Upcroft J.A."/>
            <person name="Townson S.M."/>
        </authorList>
    </citation>
    <scope>NUCLEOTIDE SEQUENCE [GENOMIC DNA]</scope>
</reference>
<reference key="2">
    <citation type="journal article" date="2002" name="J. Biol. Chem.">
        <title>Annexin XXI (ANX21) of Giardia lamblia has sequence motifs uniquely shared by giardial annexins and is specifically localized in the flagella.</title>
        <authorList>
            <person name="Szkodowska A."/>
            <person name="Mueller M.C.M."/>
            <person name="Linke C."/>
            <person name="Scholze H."/>
        </authorList>
    </citation>
    <scope>NUCLEOTIDE SEQUENCE [GENOMIC DNA]</scope>
    <scope>SUBCELLULAR LOCATION</scope>
</reference>
<sequence length="337" mass="38584">MANKNYQMSTGVTAVVQKVVEACQDESKRLDLIEIARSYPPNQLRNMQRTFQAITGTFLDAFLKKHLSKDFESLVLMLYKPRAQLLCELIRGATKGAGTDEKCLVDVLLTIETHEVREIRQLYYQLYNDSLGDVVRKDCGDKYMWAKLINAVATGDRIPRDTHELEEDLVLVRKAIETKGVKKDEVSTWIRIFATYTRADFRQLHKMYSAKYNGDSLRAGVEDEFQGLDEYAFKLAHDFLYDPCCAAAFSMNVAFAGSGSDSNRLNRITAMHFRECKGCKYYYKKVYGQAFDERCATELKGVYGDAIKLLWEPVTVPLLSMDDYQGSEQHRPMTLEL</sequence>
<keyword id="KW-0002">3D-structure</keyword>
<keyword id="KW-0041">Annexin</keyword>
<keyword id="KW-0106">Calcium</keyword>
<keyword id="KW-0111">Calcium/phospholipid-binding</keyword>
<keyword id="KW-0966">Cell projection</keyword>
<keyword id="KW-0969">Cilium</keyword>
<keyword id="KW-0970">Cilium biogenesis/degradation</keyword>
<keyword id="KW-0282">Flagellum</keyword>
<keyword id="KW-0677">Repeat</keyword>
<accession>Q9NFS4</accession>
<accession>Q24981</accession>
<evidence type="ECO:0000255" key="1">
    <source>
        <dbReference type="PROSITE-ProRule" id="PRU01245"/>
    </source>
</evidence>
<evidence type="ECO:0000269" key="2">
    <source>
    </source>
</evidence>
<evidence type="ECO:0000305" key="3"/>
<evidence type="ECO:0007829" key="4">
    <source>
        <dbReference type="PDB" id="3CHJ"/>
    </source>
</evidence>
<feature type="chain" id="PRO_0000067521" description="Annexin E1">
    <location>
        <begin position="1"/>
        <end position="337"/>
    </location>
</feature>
<feature type="repeat" description="Annexin 1" evidence="1">
    <location>
        <begin position="10"/>
        <end position="80"/>
    </location>
</feature>
<feature type="repeat" description="Annexin 2" evidence="1">
    <location>
        <begin position="81"/>
        <end position="154"/>
    </location>
</feature>
<feature type="repeat" description="Annexin 3" evidence="1">
    <location>
        <begin position="161"/>
        <end position="238"/>
    </location>
</feature>
<feature type="repeat" description="Annexin 4" evidence="1">
    <location>
        <begin position="242"/>
        <end position="312"/>
    </location>
</feature>
<feature type="helix" evidence="4">
    <location>
        <begin position="12"/>
        <end position="24"/>
    </location>
</feature>
<feature type="helix" evidence="4">
    <location>
        <begin position="26"/>
        <end position="30"/>
    </location>
</feature>
<feature type="helix" evidence="4">
    <location>
        <begin position="31"/>
        <end position="38"/>
    </location>
</feature>
<feature type="helix" evidence="4">
    <location>
        <begin position="41"/>
        <end position="55"/>
    </location>
</feature>
<feature type="helix" evidence="4">
    <location>
        <begin position="59"/>
        <end position="64"/>
    </location>
</feature>
<feature type="helix" evidence="4">
    <location>
        <begin position="69"/>
        <end position="78"/>
    </location>
</feature>
<feature type="helix" evidence="4">
    <location>
        <begin position="82"/>
        <end position="94"/>
    </location>
</feature>
<feature type="strand" evidence="4">
    <location>
        <begin position="95"/>
        <end position="98"/>
    </location>
</feature>
<feature type="helix" evidence="4">
    <location>
        <begin position="101"/>
        <end position="108"/>
    </location>
</feature>
<feature type="helix" evidence="4">
    <location>
        <begin position="113"/>
        <end position="127"/>
    </location>
</feature>
<feature type="helix" evidence="4">
    <location>
        <begin position="131"/>
        <end position="139"/>
    </location>
</feature>
<feature type="strand" evidence="4">
    <location>
        <begin position="141"/>
        <end position="143"/>
    </location>
</feature>
<feature type="helix" evidence="4">
    <location>
        <begin position="144"/>
        <end position="154"/>
    </location>
</feature>
<feature type="helix" evidence="4">
    <location>
        <begin position="162"/>
        <end position="177"/>
    </location>
</feature>
<feature type="strand" evidence="4">
    <location>
        <begin position="178"/>
        <end position="180"/>
    </location>
</feature>
<feature type="helix" evidence="4">
    <location>
        <begin position="183"/>
        <end position="185"/>
    </location>
</feature>
<feature type="helix" evidence="4">
    <location>
        <begin position="186"/>
        <end position="195"/>
    </location>
</feature>
<feature type="helix" evidence="4">
    <location>
        <begin position="198"/>
        <end position="211"/>
    </location>
</feature>
<feature type="turn" evidence="4">
    <location>
        <begin position="212"/>
        <end position="214"/>
    </location>
</feature>
<feature type="helix" evidence="4">
    <location>
        <begin position="217"/>
        <end position="224"/>
    </location>
</feature>
<feature type="helix" evidence="4">
    <location>
        <begin position="227"/>
        <end position="241"/>
    </location>
</feature>
<feature type="helix" evidence="4">
    <location>
        <begin position="243"/>
        <end position="254"/>
    </location>
</feature>
<feature type="strand" evidence="4">
    <location>
        <begin position="257"/>
        <end position="259"/>
    </location>
</feature>
<feature type="helix" evidence="4">
    <location>
        <begin position="262"/>
        <end position="272"/>
    </location>
</feature>
<feature type="turn" evidence="4">
    <location>
        <begin position="273"/>
        <end position="275"/>
    </location>
</feature>
<feature type="helix" evidence="4">
    <location>
        <begin position="279"/>
        <end position="287"/>
    </location>
</feature>
<feature type="helix" evidence="4">
    <location>
        <begin position="291"/>
        <end position="298"/>
    </location>
</feature>
<feature type="helix" evidence="4">
    <location>
        <begin position="301"/>
        <end position="310"/>
    </location>
</feature>
<comment type="function">
    <text>May function as a calcium-regulated structural element linking phospholipid bilayer and underlying axoneme.</text>
</comment>
<comment type="subcellular location">
    <subcellularLocation>
        <location evidence="2">Cell projection</location>
        <location evidence="2">Cilium</location>
        <location evidence="2">Flagellum</location>
    </subcellularLocation>
</comment>
<comment type="domain">
    <text>A pair of annexin repeats may form one binding site for calcium and phospholipid.</text>
</comment>
<comment type="similarity">
    <text evidence="1">Belongs to the annexin family.</text>
</comment>
<comment type="sequence caution" evidence="3">
    <conflict type="frameshift">
        <sequence resource="EMBL-CDS" id="AAA74893"/>
    </conflict>
</comment>
<gene>
    <name type="primary">ANXE1</name>
    <name type="synonym">ANX21</name>
</gene>
<dbReference type="EMBL" id="L27221">
    <property type="protein sequence ID" value="AAA74893.1"/>
    <property type="status" value="ALT_FRAME"/>
    <property type="molecule type" value="Genomic_DNA"/>
</dbReference>
<dbReference type="EMBL" id="AJ271737">
    <property type="protein sequence ID" value="CAB86987.1"/>
    <property type="molecule type" value="Genomic_DNA"/>
</dbReference>
<dbReference type="PIR" id="T18527">
    <property type="entry name" value="T18527"/>
</dbReference>
<dbReference type="PDB" id="3CHJ">
    <property type="method" value="X-ray"/>
    <property type="resolution" value="1.60 A"/>
    <property type="chains" value="A=1-337"/>
</dbReference>
<dbReference type="PDB" id="3CHK">
    <property type="method" value="X-ray"/>
    <property type="resolution" value="1.65 A"/>
    <property type="chains" value="A=1-337"/>
</dbReference>
<dbReference type="PDB" id="3CHL">
    <property type="method" value="X-ray"/>
    <property type="resolution" value="1.90 A"/>
    <property type="chains" value="A=1-337"/>
</dbReference>
<dbReference type="PDBsum" id="3CHJ"/>
<dbReference type="PDBsum" id="3CHK"/>
<dbReference type="PDBsum" id="3CHL"/>
<dbReference type="SMR" id="Q9NFS4"/>
<dbReference type="VEuPathDB" id="GiardiaDB:DHA2_15097"/>
<dbReference type="VEuPathDB" id="GiardiaDB:GL50581_4146"/>
<dbReference type="VEuPathDB" id="GiardiaDB:GL50803_0015097"/>
<dbReference type="VEuPathDB" id="GiardiaDB:QR46_1529"/>
<dbReference type="eggNOG" id="KOG0819">
    <property type="taxonomic scope" value="Eukaryota"/>
</dbReference>
<dbReference type="EvolutionaryTrace" id="Q9NFS4"/>
<dbReference type="GO" id="GO:0005737">
    <property type="term" value="C:cytoplasm"/>
    <property type="evidence" value="ECO:0007669"/>
    <property type="project" value="TreeGrafter"/>
</dbReference>
<dbReference type="GO" id="GO:0031514">
    <property type="term" value="C:motile cilium"/>
    <property type="evidence" value="ECO:0007669"/>
    <property type="project" value="UniProtKB-SubCell"/>
</dbReference>
<dbReference type="GO" id="GO:0005886">
    <property type="term" value="C:plasma membrane"/>
    <property type="evidence" value="ECO:0007669"/>
    <property type="project" value="TreeGrafter"/>
</dbReference>
<dbReference type="GO" id="GO:0005509">
    <property type="term" value="F:calcium ion binding"/>
    <property type="evidence" value="ECO:0007669"/>
    <property type="project" value="InterPro"/>
</dbReference>
<dbReference type="GO" id="GO:0005544">
    <property type="term" value="F:calcium-dependent phospholipid binding"/>
    <property type="evidence" value="ECO:0007669"/>
    <property type="project" value="UniProtKB-KW"/>
</dbReference>
<dbReference type="GO" id="GO:0001786">
    <property type="term" value="F:phosphatidylserine binding"/>
    <property type="evidence" value="ECO:0007669"/>
    <property type="project" value="TreeGrafter"/>
</dbReference>
<dbReference type="GO" id="GO:0030030">
    <property type="term" value="P:cell projection organization"/>
    <property type="evidence" value="ECO:0007669"/>
    <property type="project" value="UniProtKB-KW"/>
</dbReference>
<dbReference type="Gene3D" id="1.10.220.10">
    <property type="entry name" value="Annexin"/>
    <property type="match status" value="4"/>
</dbReference>
<dbReference type="InterPro" id="IPR001464">
    <property type="entry name" value="Annexin"/>
</dbReference>
<dbReference type="InterPro" id="IPR018502">
    <property type="entry name" value="Annexin_repeat"/>
</dbReference>
<dbReference type="InterPro" id="IPR037104">
    <property type="entry name" value="Annexin_sf"/>
</dbReference>
<dbReference type="PANTHER" id="PTHR10502">
    <property type="entry name" value="ANNEXIN"/>
    <property type="match status" value="1"/>
</dbReference>
<dbReference type="PANTHER" id="PTHR10502:SF102">
    <property type="entry name" value="ANNEXIN B11"/>
    <property type="match status" value="1"/>
</dbReference>
<dbReference type="Pfam" id="PF00191">
    <property type="entry name" value="Annexin"/>
    <property type="match status" value="1"/>
</dbReference>
<dbReference type="Pfam" id="PF22293">
    <property type="entry name" value="ANXE1_4th"/>
    <property type="match status" value="1"/>
</dbReference>
<dbReference type="PRINTS" id="PR00196">
    <property type="entry name" value="ANNEXIN"/>
</dbReference>
<dbReference type="SMART" id="SM00335">
    <property type="entry name" value="ANX"/>
    <property type="match status" value="2"/>
</dbReference>
<dbReference type="SUPFAM" id="SSF47874">
    <property type="entry name" value="Annexin"/>
    <property type="match status" value="1"/>
</dbReference>
<dbReference type="PROSITE" id="PS51897">
    <property type="entry name" value="ANNEXIN_2"/>
    <property type="match status" value="4"/>
</dbReference>
<protein>
    <recommendedName>
        <fullName>Annexin E1</fullName>
    </recommendedName>
    <alternativeName>
        <fullName>Annexin 21</fullName>
    </alternativeName>
    <alternativeName>
        <fullName>Annexin XXI</fullName>
    </alternativeName>
</protein>